<name>LOLB_ECO81</name>
<accession>B7MTZ3</accession>
<comment type="function">
    <text evidence="1">Plays a critical role in the incorporation of lipoproteins in the outer membrane after they are released by the LolA protein.</text>
</comment>
<comment type="subunit">
    <text evidence="1">Monomer.</text>
</comment>
<comment type="subcellular location">
    <subcellularLocation>
        <location evidence="1">Cell outer membrane</location>
        <topology evidence="1">Lipid-anchor</topology>
    </subcellularLocation>
</comment>
<comment type="similarity">
    <text evidence="1">Belongs to the LolB family.</text>
</comment>
<gene>
    <name evidence="1" type="primary">lolB</name>
    <name type="ordered locus">ECED1_1357</name>
</gene>
<protein>
    <recommendedName>
        <fullName evidence="1">Outer-membrane lipoprotein LolB</fullName>
    </recommendedName>
</protein>
<organism>
    <name type="scientific">Escherichia coli O81 (strain ED1a)</name>
    <dbReference type="NCBI Taxonomy" id="585397"/>
    <lineage>
        <taxon>Bacteria</taxon>
        <taxon>Pseudomonadati</taxon>
        <taxon>Pseudomonadota</taxon>
        <taxon>Gammaproteobacteria</taxon>
        <taxon>Enterobacterales</taxon>
        <taxon>Enterobacteriaceae</taxon>
        <taxon>Escherichia</taxon>
    </lineage>
</organism>
<proteinExistence type="inferred from homology"/>
<feature type="signal peptide" evidence="1">
    <location>
        <begin position="1"/>
        <end position="21"/>
    </location>
</feature>
<feature type="chain" id="PRO_1000190860" description="Outer-membrane lipoprotein LolB">
    <location>
        <begin position="22"/>
        <end position="207"/>
    </location>
</feature>
<feature type="lipid moiety-binding region" description="N-palmitoyl cysteine" evidence="1">
    <location>
        <position position="22"/>
    </location>
</feature>
<feature type="lipid moiety-binding region" description="S-diacylglycerol cysteine" evidence="1">
    <location>
        <position position="22"/>
    </location>
</feature>
<dbReference type="EMBL" id="CU928162">
    <property type="protein sequence ID" value="CAR07557.1"/>
    <property type="molecule type" value="Genomic_DNA"/>
</dbReference>
<dbReference type="RefSeq" id="WP_001130698.1">
    <property type="nucleotide sequence ID" value="NC_011745.1"/>
</dbReference>
<dbReference type="SMR" id="B7MTZ3"/>
<dbReference type="KEGG" id="ecq:ECED1_1357"/>
<dbReference type="HOGENOM" id="CLU_092816_1_1_6"/>
<dbReference type="Proteomes" id="UP000000748">
    <property type="component" value="Chromosome"/>
</dbReference>
<dbReference type="GO" id="GO:0009279">
    <property type="term" value="C:cell outer membrane"/>
    <property type="evidence" value="ECO:0007669"/>
    <property type="project" value="UniProtKB-SubCell"/>
</dbReference>
<dbReference type="GO" id="GO:0044874">
    <property type="term" value="P:lipoprotein localization to outer membrane"/>
    <property type="evidence" value="ECO:0007669"/>
    <property type="project" value="UniProtKB-UniRule"/>
</dbReference>
<dbReference type="GO" id="GO:0015031">
    <property type="term" value="P:protein transport"/>
    <property type="evidence" value="ECO:0007669"/>
    <property type="project" value="UniProtKB-KW"/>
</dbReference>
<dbReference type="CDD" id="cd16326">
    <property type="entry name" value="LolB"/>
    <property type="match status" value="1"/>
</dbReference>
<dbReference type="FunFam" id="2.50.20.10:FF:000002">
    <property type="entry name" value="Outer-membrane lipoprotein LolB"/>
    <property type="match status" value="1"/>
</dbReference>
<dbReference type="Gene3D" id="2.50.20.10">
    <property type="entry name" value="Lipoprotein localisation LolA/LolB/LppX"/>
    <property type="match status" value="1"/>
</dbReference>
<dbReference type="HAMAP" id="MF_00233">
    <property type="entry name" value="LolB"/>
    <property type="match status" value="1"/>
</dbReference>
<dbReference type="InterPro" id="IPR029046">
    <property type="entry name" value="LolA/LolB/LppX"/>
</dbReference>
<dbReference type="InterPro" id="IPR004565">
    <property type="entry name" value="OM_lipoprot_LolB"/>
</dbReference>
<dbReference type="NCBIfam" id="TIGR00548">
    <property type="entry name" value="lolB"/>
    <property type="match status" value="1"/>
</dbReference>
<dbReference type="Pfam" id="PF03550">
    <property type="entry name" value="LolB"/>
    <property type="match status" value="1"/>
</dbReference>
<dbReference type="SUPFAM" id="SSF89392">
    <property type="entry name" value="Prokaryotic lipoproteins and lipoprotein localization factors"/>
    <property type="match status" value="1"/>
</dbReference>
<dbReference type="PROSITE" id="PS51257">
    <property type="entry name" value="PROKAR_LIPOPROTEIN"/>
    <property type="match status" value="1"/>
</dbReference>
<sequence length="207" mass="23567">MPLPDFRLIRLLPLAALVLTACSVTTPKGPGKSPDSPQWRQHQQDVRNLNQYQTRGAFAYISDQQKVYARFFWQQTGQDRYRLLLTNPLGSTELELNAQPGNVQLVDNKGQRYTSDDAEEMIGKLTGMPIPLNSLRQWILGLPGDATDYKLDDQYRLSEITYSQNGKNWKVVYGGYDTKTQPAMPANMELTDGGQRIKLKMDNWIVK</sequence>
<evidence type="ECO:0000255" key="1">
    <source>
        <dbReference type="HAMAP-Rule" id="MF_00233"/>
    </source>
</evidence>
<reference key="1">
    <citation type="journal article" date="2009" name="PLoS Genet.">
        <title>Organised genome dynamics in the Escherichia coli species results in highly diverse adaptive paths.</title>
        <authorList>
            <person name="Touchon M."/>
            <person name="Hoede C."/>
            <person name="Tenaillon O."/>
            <person name="Barbe V."/>
            <person name="Baeriswyl S."/>
            <person name="Bidet P."/>
            <person name="Bingen E."/>
            <person name="Bonacorsi S."/>
            <person name="Bouchier C."/>
            <person name="Bouvet O."/>
            <person name="Calteau A."/>
            <person name="Chiapello H."/>
            <person name="Clermont O."/>
            <person name="Cruveiller S."/>
            <person name="Danchin A."/>
            <person name="Diard M."/>
            <person name="Dossat C."/>
            <person name="Karoui M.E."/>
            <person name="Frapy E."/>
            <person name="Garry L."/>
            <person name="Ghigo J.M."/>
            <person name="Gilles A.M."/>
            <person name="Johnson J."/>
            <person name="Le Bouguenec C."/>
            <person name="Lescat M."/>
            <person name="Mangenot S."/>
            <person name="Martinez-Jehanne V."/>
            <person name="Matic I."/>
            <person name="Nassif X."/>
            <person name="Oztas S."/>
            <person name="Petit M.A."/>
            <person name="Pichon C."/>
            <person name="Rouy Z."/>
            <person name="Ruf C.S."/>
            <person name="Schneider D."/>
            <person name="Tourret J."/>
            <person name="Vacherie B."/>
            <person name="Vallenet D."/>
            <person name="Medigue C."/>
            <person name="Rocha E.P.C."/>
            <person name="Denamur E."/>
        </authorList>
    </citation>
    <scope>NUCLEOTIDE SEQUENCE [LARGE SCALE GENOMIC DNA]</scope>
    <source>
        <strain>ED1a</strain>
    </source>
</reference>
<keyword id="KW-0998">Cell outer membrane</keyword>
<keyword id="KW-0143">Chaperone</keyword>
<keyword id="KW-0449">Lipoprotein</keyword>
<keyword id="KW-0472">Membrane</keyword>
<keyword id="KW-0564">Palmitate</keyword>
<keyword id="KW-0653">Protein transport</keyword>
<keyword id="KW-0732">Signal</keyword>
<keyword id="KW-0813">Transport</keyword>